<sequence length="152" mass="17020">MSQLCPCGSAVEYSLCCHPYVSGEKVAPDPEHLMRSRYCAFVMQDADYLIKTWHPSCGAAALRAELMTGFAHTEWLGLTVFEHCWQDADNIGFVSFVARFTEGGKTGAIIERSRFLKENGQWYYIDGTRPQFGRNDPCPCGSGKKFKKCCGQ</sequence>
<keyword id="KW-1185">Reference proteome</keyword>
<name>YCHJ_SHIFL</name>
<gene>
    <name type="primary">ychJ</name>
    <name type="ordered locus">SF1233</name>
    <name type="ordered locus">S1319</name>
</gene>
<feature type="chain" id="PRO_0000071815" description="UPF0225 protein YchJ">
    <location>
        <begin position="1"/>
        <end position="152"/>
    </location>
</feature>
<feature type="sequence conflict" description="In Ref. 1." evidence="1" ref="1">
    <original>MR</original>
    <variation>IG</variation>
    <location>
        <begin position="34"/>
        <end position="35"/>
    </location>
</feature>
<feature type="sequence conflict" description="In Ref. 1." evidence="1" ref="1">
    <original>AAA</original>
    <variation>QRP</variation>
    <location>
        <begin position="59"/>
        <end position="61"/>
    </location>
</feature>
<reference key="1">
    <citation type="journal article" date="1992" name="Mol. Microbiol.">
        <title>Temperature regulation of Shigella virulence: identification of the repressor gene virR, an analogue of hns, and partial complementation by tyrosyl transfer RNA (tRNA1(Tyr)).</title>
        <authorList>
            <person name="Hromockyj A.E."/>
            <person name="Tucker S.C."/>
            <person name="Maurelli A.T."/>
        </authorList>
    </citation>
    <scope>NUCLEOTIDE SEQUENCE [GENOMIC DNA]</scope>
    <source>
        <strain>ATCC 700930 / 2457T / Serotype 2a</strain>
    </source>
</reference>
<reference key="2">
    <citation type="journal article" date="2002" name="Nucleic Acids Res.">
        <title>Genome sequence of Shigella flexneri 2a: insights into pathogenicity through comparison with genomes of Escherichia coli K12 and O157.</title>
        <authorList>
            <person name="Jin Q."/>
            <person name="Yuan Z."/>
            <person name="Xu J."/>
            <person name="Wang Y."/>
            <person name="Shen Y."/>
            <person name="Lu W."/>
            <person name="Wang J."/>
            <person name="Liu H."/>
            <person name="Yang J."/>
            <person name="Yang F."/>
            <person name="Zhang X."/>
            <person name="Zhang J."/>
            <person name="Yang G."/>
            <person name="Wu H."/>
            <person name="Qu D."/>
            <person name="Dong J."/>
            <person name="Sun L."/>
            <person name="Xue Y."/>
            <person name="Zhao A."/>
            <person name="Gao Y."/>
            <person name="Zhu J."/>
            <person name="Kan B."/>
            <person name="Ding K."/>
            <person name="Chen S."/>
            <person name="Cheng H."/>
            <person name="Yao Z."/>
            <person name="He B."/>
            <person name="Chen R."/>
            <person name="Ma D."/>
            <person name="Qiang B."/>
            <person name="Wen Y."/>
            <person name="Hou Y."/>
            <person name="Yu J."/>
        </authorList>
    </citation>
    <scope>NUCLEOTIDE SEQUENCE [LARGE SCALE GENOMIC DNA]</scope>
    <source>
        <strain>301 / Serotype 2a</strain>
    </source>
</reference>
<reference key="3">
    <citation type="journal article" date="2003" name="Infect. Immun.">
        <title>Complete genome sequence and comparative genomics of Shigella flexneri serotype 2a strain 2457T.</title>
        <authorList>
            <person name="Wei J."/>
            <person name="Goldberg M.B."/>
            <person name="Burland V."/>
            <person name="Venkatesan M.M."/>
            <person name="Deng W."/>
            <person name="Fournier G."/>
            <person name="Mayhew G.F."/>
            <person name="Plunkett G. III"/>
            <person name="Rose D.J."/>
            <person name="Darling A."/>
            <person name="Mau B."/>
            <person name="Perna N.T."/>
            <person name="Payne S.M."/>
            <person name="Runyen-Janecky L.J."/>
            <person name="Zhou S."/>
            <person name="Schwartz D.C."/>
            <person name="Blattner F.R."/>
        </authorList>
    </citation>
    <scope>NUCLEOTIDE SEQUENCE [LARGE SCALE GENOMIC DNA]</scope>
    <source>
        <strain>ATCC 700930 / 2457T / Serotype 2a</strain>
    </source>
</reference>
<evidence type="ECO:0000305" key="1"/>
<accession>P38481</accession>
<dbReference type="EMBL" id="X66849">
    <property type="status" value="NOT_ANNOTATED_CDS"/>
    <property type="molecule type" value="Genomic_DNA"/>
</dbReference>
<dbReference type="EMBL" id="AE005674">
    <property type="protein sequence ID" value="AAN42846.2"/>
    <property type="status" value="ALT_INIT"/>
    <property type="molecule type" value="Genomic_DNA"/>
</dbReference>
<dbReference type="EMBL" id="AE014073">
    <property type="protein sequence ID" value="AAP16731.1"/>
    <property type="status" value="ALT_INIT"/>
    <property type="molecule type" value="Genomic_DNA"/>
</dbReference>
<dbReference type="RefSeq" id="WP_005105319.1">
    <property type="nucleotide sequence ID" value="NZ_WPGW01000029.1"/>
</dbReference>
<dbReference type="SMR" id="P38481"/>
<dbReference type="STRING" id="198214.SF1233"/>
<dbReference type="PaxDb" id="198214-SF1233"/>
<dbReference type="KEGG" id="sfx:S1319"/>
<dbReference type="PATRIC" id="fig|623.156.peg.720"/>
<dbReference type="HOGENOM" id="CLU_099590_0_0_6"/>
<dbReference type="Proteomes" id="UP000001006">
    <property type="component" value="Chromosome"/>
</dbReference>
<dbReference type="Proteomes" id="UP000002673">
    <property type="component" value="Chromosome"/>
</dbReference>
<dbReference type="Gene3D" id="3.10.450.50">
    <property type="match status" value="1"/>
</dbReference>
<dbReference type="HAMAP" id="MF_00612">
    <property type="entry name" value="UPF0225"/>
    <property type="match status" value="1"/>
</dbReference>
<dbReference type="InterPro" id="IPR032710">
    <property type="entry name" value="NTF2-like_dom_sf"/>
</dbReference>
<dbReference type="InterPro" id="IPR004027">
    <property type="entry name" value="SEC_C_motif"/>
</dbReference>
<dbReference type="InterPro" id="IPR023006">
    <property type="entry name" value="UPF0225"/>
</dbReference>
<dbReference type="InterPro" id="IPR048469">
    <property type="entry name" value="YchJ-like_M"/>
</dbReference>
<dbReference type="NCBIfam" id="NF002449">
    <property type="entry name" value="PRK01617.1"/>
    <property type="match status" value="1"/>
</dbReference>
<dbReference type="NCBIfam" id="NF002486">
    <property type="entry name" value="PRK01752.1"/>
    <property type="match status" value="1"/>
</dbReference>
<dbReference type="PANTHER" id="PTHR33747:SF1">
    <property type="entry name" value="ADENYLATE CYCLASE-ASSOCIATED CAP C-TERMINAL DOMAIN-CONTAINING PROTEIN"/>
    <property type="match status" value="1"/>
</dbReference>
<dbReference type="PANTHER" id="PTHR33747">
    <property type="entry name" value="UPF0225 PROTEIN SCO1677"/>
    <property type="match status" value="1"/>
</dbReference>
<dbReference type="Pfam" id="PF02810">
    <property type="entry name" value="SEC-C"/>
    <property type="match status" value="2"/>
</dbReference>
<dbReference type="Pfam" id="PF17775">
    <property type="entry name" value="YchJ_M-like"/>
    <property type="match status" value="1"/>
</dbReference>
<dbReference type="SUPFAM" id="SSF54427">
    <property type="entry name" value="NTF2-like"/>
    <property type="match status" value="1"/>
</dbReference>
<dbReference type="SUPFAM" id="SSF103642">
    <property type="entry name" value="Sec-C motif"/>
    <property type="match status" value="1"/>
</dbReference>
<protein>
    <recommendedName>
        <fullName>UPF0225 protein YchJ</fullName>
    </recommendedName>
</protein>
<proteinExistence type="inferred from homology"/>
<organism>
    <name type="scientific">Shigella flexneri</name>
    <dbReference type="NCBI Taxonomy" id="623"/>
    <lineage>
        <taxon>Bacteria</taxon>
        <taxon>Pseudomonadati</taxon>
        <taxon>Pseudomonadota</taxon>
        <taxon>Gammaproteobacteria</taxon>
        <taxon>Enterobacterales</taxon>
        <taxon>Enterobacteriaceae</taxon>
        <taxon>Shigella</taxon>
    </lineage>
</organism>
<comment type="similarity">
    <text evidence="1">Belongs to the UPF0225 family.</text>
</comment>
<comment type="sequence caution" evidence="1">
    <conflict type="erroneous initiation">
        <sequence resource="EMBL-CDS" id="AAN42846"/>
    </conflict>
    <text>Truncated N-terminus.</text>
</comment>
<comment type="sequence caution" evidence="1">
    <conflict type="erroneous initiation">
        <sequence resource="EMBL-CDS" id="AAP16731"/>
    </conflict>
    <text>Truncated N-terminus.</text>
</comment>
<comment type="sequence caution" evidence="1">
    <conflict type="frameshift">
        <sequence resource="EMBL" id="X66849"/>
    </conflict>
</comment>